<dbReference type="EC" id="6.1.1.22" evidence="1"/>
<dbReference type="EMBL" id="AE004439">
    <property type="protein sequence ID" value="AAK02727.1"/>
    <property type="status" value="ALT_INIT"/>
    <property type="molecule type" value="Genomic_DNA"/>
</dbReference>
<dbReference type="RefSeq" id="WP_005726506.1">
    <property type="nucleotide sequence ID" value="NC_002663.1"/>
</dbReference>
<dbReference type="SMR" id="Q9CN06"/>
<dbReference type="STRING" id="272843.PM0643"/>
<dbReference type="EnsemblBacteria" id="AAK02727">
    <property type="protein sequence ID" value="AAK02727"/>
    <property type="gene ID" value="PM0643"/>
</dbReference>
<dbReference type="KEGG" id="pmu:PM0643"/>
<dbReference type="HOGENOM" id="CLU_004553_2_0_6"/>
<dbReference type="OrthoDB" id="9762036at2"/>
<dbReference type="Proteomes" id="UP000000809">
    <property type="component" value="Chromosome"/>
</dbReference>
<dbReference type="GO" id="GO:0005737">
    <property type="term" value="C:cytoplasm"/>
    <property type="evidence" value="ECO:0007669"/>
    <property type="project" value="UniProtKB-SubCell"/>
</dbReference>
<dbReference type="GO" id="GO:0004816">
    <property type="term" value="F:asparagine-tRNA ligase activity"/>
    <property type="evidence" value="ECO:0007669"/>
    <property type="project" value="UniProtKB-UniRule"/>
</dbReference>
<dbReference type="GO" id="GO:0005524">
    <property type="term" value="F:ATP binding"/>
    <property type="evidence" value="ECO:0007669"/>
    <property type="project" value="UniProtKB-UniRule"/>
</dbReference>
<dbReference type="GO" id="GO:0003676">
    <property type="term" value="F:nucleic acid binding"/>
    <property type="evidence" value="ECO:0007669"/>
    <property type="project" value="InterPro"/>
</dbReference>
<dbReference type="GO" id="GO:0006421">
    <property type="term" value="P:asparaginyl-tRNA aminoacylation"/>
    <property type="evidence" value="ECO:0007669"/>
    <property type="project" value="UniProtKB-UniRule"/>
</dbReference>
<dbReference type="CDD" id="cd00776">
    <property type="entry name" value="AsxRS_core"/>
    <property type="match status" value="1"/>
</dbReference>
<dbReference type="CDD" id="cd04318">
    <property type="entry name" value="EcAsnRS_like_N"/>
    <property type="match status" value="1"/>
</dbReference>
<dbReference type="FunFam" id="3.30.930.10:FF:000016">
    <property type="entry name" value="Asparagine--tRNA ligase"/>
    <property type="match status" value="1"/>
</dbReference>
<dbReference type="Gene3D" id="3.30.930.10">
    <property type="entry name" value="Bira Bifunctional Protein, Domain 2"/>
    <property type="match status" value="1"/>
</dbReference>
<dbReference type="Gene3D" id="2.40.50.140">
    <property type="entry name" value="Nucleic acid-binding proteins"/>
    <property type="match status" value="1"/>
</dbReference>
<dbReference type="HAMAP" id="MF_00534">
    <property type="entry name" value="Asn_tRNA_synth"/>
    <property type="match status" value="1"/>
</dbReference>
<dbReference type="InterPro" id="IPR004364">
    <property type="entry name" value="Aa-tRNA-synt_II"/>
</dbReference>
<dbReference type="InterPro" id="IPR006195">
    <property type="entry name" value="aa-tRNA-synth_II"/>
</dbReference>
<dbReference type="InterPro" id="IPR045864">
    <property type="entry name" value="aa-tRNA-synth_II/BPL/LPL"/>
</dbReference>
<dbReference type="InterPro" id="IPR004522">
    <property type="entry name" value="Asn-tRNA-ligase"/>
</dbReference>
<dbReference type="InterPro" id="IPR002312">
    <property type="entry name" value="Asp/Asn-tRNA-synth_IIb"/>
</dbReference>
<dbReference type="InterPro" id="IPR012340">
    <property type="entry name" value="NA-bd_OB-fold"/>
</dbReference>
<dbReference type="InterPro" id="IPR004365">
    <property type="entry name" value="NA-bd_OB_tRNA"/>
</dbReference>
<dbReference type="NCBIfam" id="TIGR00457">
    <property type="entry name" value="asnS"/>
    <property type="match status" value="1"/>
</dbReference>
<dbReference type="NCBIfam" id="NF003037">
    <property type="entry name" value="PRK03932.1"/>
    <property type="match status" value="1"/>
</dbReference>
<dbReference type="PANTHER" id="PTHR22594:SF34">
    <property type="entry name" value="ASPARAGINE--TRNA LIGASE, MITOCHONDRIAL-RELATED"/>
    <property type="match status" value="1"/>
</dbReference>
<dbReference type="PANTHER" id="PTHR22594">
    <property type="entry name" value="ASPARTYL/LYSYL-TRNA SYNTHETASE"/>
    <property type="match status" value="1"/>
</dbReference>
<dbReference type="Pfam" id="PF00152">
    <property type="entry name" value="tRNA-synt_2"/>
    <property type="match status" value="1"/>
</dbReference>
<dbReference type="Pfam" id="PF01336">
    <property type="entry name" value="tRNA_anti-codon"/>
    <property type="match status" value="1"/>
</dbReference>
<dbReference type="PRINTS" id="PR01042">
    <property type="entry name" value="TRNASYNTHASP"/>
</dbReference>
<dbReference type="SUPFAM" id="SSF55681">
    <property type="entry name" value="Class II aaRS and biotin synthetases"/>
    <property type="match status" value="1"/>
</dbReference>
<dbReference type="SUPFAM" id="SSF50249">
    <property type="entry name" value="Nucleic acid-binding proteins"/>
    <property type="match status" value="1"/>
</dbReference>
<dbReference type="PROSITE" id="PS50862">
    <property type="entry name" value="AA_TRNA_LIGASE_II"/>
    <property type="match status" value="1"/>
</dbReference>
<organism>
    <name type="scientific">Pasteurella multocida (strain Pm70)</name>
    <dbReference type="NCBI Taxonomy" id="272843"/>
    <lineage>
        <taxon>Bacteria</taxon>
        <taxon>Pseudomonadati</taxon>
        <taxon>Pseudomonadota</taxon>
        <taxon>Gammaproteobacteria</taxon>
        <taxon>Pasteurellales</taxon>
        <taxon>Pasteurellaceae</taxon>
        <taxon>Pasteurella</taxon>
    </lineage>
</organism>
<gene>
    <name evidence="1" type="primary">asnS</name>
    <name type="ordered locus">PM0643</name>
</gene>
<comment type="catalytic activity">
    <reaction evidence="1">
        <text>tRNA(Asn) + L-asparagine + ATP = L-asparaginyl-tRNA(Asn) + AMP + diphosphate + H(+)</text>
        <dbReference type="Rhea" id="RHEA:11180"/>
        <dbReference type="Rhea" id="RHEA-COMP:9659"/>
        <dbReference type="Rhea" id="RHEA-COMP:9674"/>
        <dbReference type="ChEBI" id="CHEBI:15378"/>
        <dbReference type="ChEBI" id="CHEBI:30616"/>
        <dbReference type="ChEBI" id="CHEBI:33019"/>
        <dbReference type="ChEBI" id="CHEBI:58048"/>
        <dbReference type="ChEBI" id="CHEBI:78442"/>
        <dbReference type="ChEBI" id="CHEBI:78515"/>
        <dbReference type="ChEBI" id="CHEBI:456215"/>
        <dbReference type="EC" id="6.1.1.22"/>
    </reaction>
</comment>
<comment type="subunit">
    <text evidence="1">Homodimer.</text>
</comment>
<comment type="subcellular location">
    <subcellularLocation>
        <location evidence="1">Cytoplasm</location>
    </subcellularLocation>
</comment>
<comment type="similarity">
    <text evidence="1">Belongs to the class-II aminoacyl-tRNA synthetase family.</text>
</comment>
<comment type="sequence caution" evidence="2">
    <conflict type="erroneous initiation">
        <sequence resource="EMBL-CDS" id="AAK02727"/>
    </conflict>
</comment>
<keyword id="KW-0030">Aminoacyl-tRNA synthetase</keyword>
<keyword id="KW-0067">ATP-binding</keyword>
<keyword id="KW-0963">Cytoplasm</keyword>
<keyword id="KW-0436">Ligase</keyword>
<keyword id="KW-0547">Nucleotide-binding</keyword>
<keyword id="KW-0648">Protein biosynthesis</keyword>
<keyword id="KW-1185">Reference proteome</keyword>
<accession>Q9CN06</accession>
<name>SYN_PASMU</name>
<reference key="1">
    <citation type="journal article" date="2001" name="Proc. Natl. Acad. Sci. U.S.A.">
        <title>Complete genomic sequence of Pasteurella multocida Pm70.</title>
        <authorList>
            <person name="May B.J."/>
            <person name="Zhang Q."/>
            <person name="Li L.L."/>
            <person name="Paustian M.L."/>
            <person name="Whittam T.S."/>
            <person name="Kapur V."/>
        </authorList>
    </citation>
    <scope>NUCLEOTIDE SEQUENCE [LARGE SCALE GENOMIC DNA]</scope>
    <source>
        <strain>Pm70</strain>
    </source>
</reference>
<proteinExistence type="inferred from homology"/>
<sequence>MTKVASIVDVLQGKIAIGETVTVRGWIRTRRDSKAGLSFLAIYDGSCFDPIQAIVNNDIENYETEVLRLTTGCSVIVTGTVVESPAEGQAVELQAEKVEVAGWVEDPETYPMAAKRHSIEYLREVAHLRPRTNIIGAVARVRHCLAQAIHRFFHEQGFYWVATPLITASDTEGAGEMFRVSTLDLENLPRDDKGAVDFSQDFFGKESFLTVSGQLNGETYACALSKIYTFGPTFRAENSNTTRHLAEFWMVEPEIAFATLADNAKLAEDMLKYVFRAVLEERKDDLKFFEKHVDNDVISRLENFINSDFAQIDYTDAIEVLLQSGKKFEFPVSWGIDLSSEHERYLAEEHFKSPVVVKNYPKDIKAFYMRLNDDGKTVAAMDVLAPGIGEIIGGSQREERLDVLDKRMIEMGLNPEDYWWYRDLRRYGTVPHAGFGLGFERLIVYVTGVQNIRDVIPFPRSPRNANF</sequence>
<feature type="chain" id="PRO_0000176438" description="Asparagine--tRNA ligase">
    <location>
        <begin position="1"/>
        <end position="467"/>
    </location>
</feature>
<evidence type="ECO:0000255" key="1">
    <source>
        <dbReference type="HAMAP-Rule" id="MF_00534"/>
    </source>
</evidence>
<evidence type="ECO:0000305" key="2"/>
<protein>
    <recommendedName>
        <fullName evidence="1">Asparagine--tRNA ligase</fullName>
        <ecNumber evidence="1">6.1.1.22</ecNumber>
    </recommendedName>
    <alternativeName>
        <fullName evidence="1">Asparaginyl-tRNA synthetase</fullName>
        <shortName evidence="1">AsnRS</shortName>
    </alternativeName>
</protein>